<dbReference type="EMBL" id="CP001083">
    <property type="protein sequence ID" value="ACQ53888.1"/>
    <property type="molecule type" value="Genomic_DNA"/>
</dbReference>
<dbReference type="RefSeq" id="WP_003395976.1">
    <property type="nucleotide sequence ID" value="NC_012658.1"/>
</dbReference>
<dbReference type="SMR" id="C3L0J9"/>
<dbReference type="GeneID" id="92939241"/>
<dbReference type="KEGG" id="cbi:CLJ_B2728"/>
<dbReference type="HOGENOM" id="CLU_064548_7_0_9"/>
<dbReference type="Proteomes" id="UP000002333">
    <property type="component" value="Chromosome"/>
</dbReference>
<dbReference type="GO" id="GO:1990904">
    <property type="term" value="C:ribonucleoprotein complex"/>
    <property type="evidence" value="ECO:0007669"/>
    <property type="project" value="UniProtKB-KW"/>
</dbReference>
<dbReference type="GO" id="GO:0005840">
    <property type="term" value="C:ribosome"/>
    <property type="evidence" value="ECO:0007669"/>
    <property type="project" value="UniProtKB-KW"/>
</dbReference>
<dbReference type="GO" id="GO:0003735">
    <property type="term" value="F:structural constituent of ribosome"/>
    <property type="evidence" value="ECO:0007669"/>
    <property type="project" value="InterPro"/>
</dbReference>
<dbReference type="GO" id="GO:0006412">
    <property type="term" value="P:translation"/>
    <property type="evidence" value="ECO:0007669"/>
    <property type="project" value="UniProtKB-UniRule"/>
</dbReference>
<dbReference type="Gene3D" id="2.30.170.40">
    <property type="entry name" value="Ribosomal protein L28/L24"/>
    <property type="match status" value="1"/>
</dbReference>
<dbReference type="HAMAP" id="MF_00373">
    <property type="entry name" value="Ribosomal_bL28"/>
    <property type="match status" value="1"/>
</dbReference>
<dbReference type="InterPro" id="IPR050096">
    <property type="entry name" value="Bacterial_rp_bL28"/>
</dbReference>
<dbReference type="InterPro" id="IPR026569">
    <property type="entry name" value="Ribosomal_bL28"/>
</dbReference>
<dbReference type="InterPro" id="IPR034704">
    <property type="entry name" value="Ribosomal_bL28/bL31-like_sf"/>
</dbReference>
<dbReference type="InterPro" id="IPR001383">
    <property type="entry name" value="Ribosomal_bL28_bact-type"/>
</dbReference>
<dbReference type="InterPro" id="IPR037147">
    <property type="entry name" value="Ribosomal_bL28_sf"/>
</dbReference>
<dbReference type="NCBIfam" id="TIGR00009">
    <property type="entry name" value="L28"/>
    <property type="match status" value="1"/>
</dbReference>
<dbReference type="PANTHER" id="PTHR39080">
    <property type="entry name" value="50S RIBOSOMAL PROTEIN L28"/>
    <property type="match status" value="1"/>
</dbReference>
<dbReference type="PANTHER" id="PTHR39080:SF1">
    <property type="entry name" value="LARGE RIBOSOMAL SUBUNIT PROTEIN BL28A"/>
    <property type="match status" value="1"/>
</dbReference>
<dbReference type="Pfam" id="PF00830">
    <property type="entry name" value="Ribosomal_L28"/>
    <property type="match status" value="1"/>
</dbReference>
<dbReference type="SUPFAM" id="SSF143800">
    <property type="entry name" value="L28p-like"/>
    <property type="match status" value="1"/>
</dbReference>
<keyword id="KW-0687">Ribonucleoprotein</keyword>
<keyword id="KW-0689">Ribosomal protein</keyword>
<evidence type="ECO:0000255" key="1">
    <source>
        <dbReference type="HAMAP-Rule" id="MF_00373"/>
    </source>
</evidence>
<evidence type="ECO:0000305" key="2"/>
<feature type="chain" id="PRO_1000205589" description="Large ribosomal subunit protein bL28">
    <location>
        <begin position="1"/>
        <end position="63"/>
    </location>
</feature>
<sequence length="63" mass="7111">MSRKCEICGKGVVYGVQYSHSHRQSKRSFAPNIKRVKAIVNGTPKRVHVCTRCLRSGKVQRAI</sequence>
<comment type="similarity">
    <text evidence="1">Belongs to the bacterial ribosomal protein bL28 family.</text>
</comment>
<reference key="1">
    <citation type="submission" date="2008-05" db="EMBL/GenBank/DDBJ databases">
        <title>Genome sequence of Clostridium botulinum Ba4 strain 657.</title>
        <authorList>
            <person name="Shrivastava S."/>
            <person name="Brown J.L."/>
            <person name="Bruce D."/>
            <person name="Detter C."/>
            <person name="Munk C."/>
            <person name="Smith L.A."/>
            <person name="Smith T.J."/>
            <person name="Sutton G."/>
            <person name="Brettin T.S."/>
        </authorList>
    </citation>
    <scope>NUCLEOTIDE SEQUENCE [LARGE SCALE GENOMIC DNA]</scope>
    <source>
        <strain>657 / Type Ba4</strain>
    </source>
</reference>
<gene>
    <name evidence="1" type="primary">rpmB</name>
    <name type="ordered locus">CLJ_B2728</name>
</gene>
<name>RL28_CLOB6</name>
<accession>C3L0J9</accession>
<proteinExistence type="inferred from homology"/>
<organism>
    <name type="scientific">Clostridium botulinum (strain 657 / Type Ba4)</name>
    <dbReference type="NCBI Taxonomy" id="515621"/>
    <lineage>
        <taxon>Bacteria</taxon>
        <taxon>Bacillati</taxon>
        <taxon>Bacillota</taxon>
        <taxon>Clostridia</taxon>
        <taxon>Eubacteriales</taxon>
        <taxon>Clostridiaceae</taxon>
        <taxon>Clostridium</taxon>
    </lineage>
</organism>
<protein>
    <recommendedName>
        <fullName evidence="1">Large ribosomal subunit protein bL28</fullName>
    </recommendedName>
    <alternativeName>
        <fullName evidence="2">50S ribosomal protein L28</fullName>
    </alternativeName>
</protein>